<keyword id="KW-0489">Methyltransferase</keyword>
<keyword id="KW-1185">Reference proteome</keyword>
<keyword id="KW-0949">S-adenosyl-L-methionine</keyword>
<keyword id="KW-0808">Transferase</keyword>
<keyword id="KW-0831">Ubiquinone biosynthesis</keyword>
<dbReference type="EC" id="2.1.1.222" evidence="1"/>
<dbReference type="EC" id="2.1.1.64" evidence="1"/>
<dbReference type="EMBL" id="CP000304">
    <property type="protein sequence ID" value="ABP79978.1"/>
    <property type="molecule type" value="Genomic_DNA"/>
</dbReference>
<dbReference type="RefSeq" id="WP_011913443.1">
    <property type="nucleotide sequence ID" value="NC_009434.1"/>
</dbReference>
<dbReference type="SMR" id="A4VLX7"/>
<dbReference type="KEGG" id="psa:PST_2323"/>
<dbReference type="eggNOG" id="COG2227">
    <property type="taxonomic scope" value="Bacteria"/>
</dbReference>
<dbReference type="HOGENOM" id="CLU_042432_5_0_6"/>
<dbReference type="UniPathway" id="UPA00232"/>
<dbReference type="Proteomes" id="UP000000233">
    <property type="component" value="Chromosome"/>
</dbReference>
<dbReference type="GO" id="GO:0102208">
    <property type="term" value="F:2-polyprenyl-6-hydroxyphenol methylase activity"/>
    <property type="evidence" value="ECO:0007669"/>
    <property type="project" value="UniProtKB-EC"/>
</dbReference>
<dbReference type="GO" id="GO:0061542">
    <property type="term" value="F:3-demethylubiquinol 3-O-methyltransferase activity"/>
    <property type="evidence" value="ECO:0007669"/>
    <property type="project" value="UniProtKB-UniRule"/>
</dbReference>
<dbReference type="GO" id="GO:0010420">
    <property type="term" value="F:polyprenyldihydroxybenzoate methyltransferase activity"/>
    <property type="evidence" value="ECO:0007669"/>
    <property type="project" value="InterPro"/>
</dbReference>
<dbReference type="GO" id="GO:0032259">
    <property type="term" value="P:methylation"/>
    <property type="evidence" value="ECO:0007669"/>
    <property type="project" value="UniProtKB-KW"/>
</dbReference>
<dbReference type="CDD" id="cd02440">
    <property type="entry name" value="AdoMet_MTases"/>
    <property type="match status" value="1"/>
</dbReference>
<dbReference type="FunFam" id="3.40.50.150:FF:000028">
    <property type="entry name" value="Ubiquinone biosynthesis O-methyltransferase"/>
    <property type="match status" value="1"/>
</dbReference>
<dbReference type="Gene3D" id="3.40.50.150">
    <property type="entry name" value="Vaccinia Virus protein VP39"/>
    <property type="match status" value="1"/>
</dbReference>
<dbReference type="HAMAP" id="MF_00472">
    <property type="entry name" value="UbiG"/>
    <property type="match status" value="1"/>
</dbReference>
<dbReference type="InterPro" id="IPR029063">
    <property type="entry name" value="SAM-dependent_MTases_sf"/>
</dbReference>
<dbReference type="InterPro" id="IPR010233">
    <property type="entry name" value="UbiG_MeTrfase"/>
</dbReference>
<dbReference type="NCBIfam" id="TIGR01983">
    <property type="entry name" value="UbiG"/>
    <property type="match status" value="1"/>
</dbReference>
<dbReference type="PANTHER" id="PTHR43464">
    <property type="entry name" value="METHYLTRANSFERASE"/>
    <property type="match status" value="1"/>
</dbReference>
<dbReference type="PANTHER" id="PTHR43464:SF19">
    <property type="entry name" value="UBIQUINONE BIOSYNTHESIS O-METHYLTRANSFERASE, MITOCHONDRIAL"/>
    <property type="match status" value="1"/>
</dbReference>
<dbReference type="Pfam" id="PF13489">
    <property type="entry name" value="Methyltransf_23"/>
    <property type="match status" value="1"/>
</dbReference>
<dbReference type="SUPFAM" id="SSF53335">
    <property type="entry name" value="S-adenosyl-L-methionine-dependent methyltransferases"/>
    <property type="match status" value="1"/>
</dbReference>
<accession>A4VLX7</accession>
<evidence type="ECO:0000255" key="1">
    <source>
        <dbReference type="HAMAP-Rule" id="MF_00472"/>
    </source>
</evidence>
<organism>
    <name type="scientific">Stutzerimonas stutzeri (strain A1501)</name>
    <name type="common">Pseudomonas stutzeri</name>
    <dbReference type="NCBI Taxonomy" id="379731"/>
    <lineage>
        <taxon>Bacteria</taxon>
        <taxon>Pseudomonadati</taxon>
        <taxon>Pseudomonadota</taxon>
        <taxon>Gammaproteobacteria</taxon>
        <taxon>Pseudomonadales</taxon>
        <taxon>Pseudomonadaceae</taxon>
        <taxon>Stutzerimonas</taxon>
    </lineage>
</organism>
<gene>
    <name evidence="1" type="primary">ubiG</name>
    <name type="ordered locus">PST_2323</name>
</gene>
<comment type="function">
    <text evidence="1">O-methyltransferase that catalyzes the 2 O-methylation steps in the ubiquinone biosynthetic pathway.</text>
</comment>
<comment type="catalytic activity">
    <reaction evidence="1">
        <text>a 3-demethylubiquinol + S-adenosyl-L-methionine = a ubiquinol + S-adenosyl-L-homocysteine + H(+)</text>
        <dbReference type="Rhea" id="RHEA:44380"/>
        <dbReference type="Rhea" id="RHEA-COMP:9566"/>
        <dbReference type="Rhea" id="RHEA-COMP:10914"/>
        <dbReference type="ChEBI" id="CHEBI:15378"/>
        <dbReference type="ChEBI" id="CHEBI:17976"/>
        <dbReference type="ChEBI" id="CHEBI:57856"/>
        <dbReference type="ChEBI" id="CHEBI:59789"/>
        <dbReference type="ChEBI" id="CHEBI:84422"/>
        <dbReference type="EC" id="2.1.1.64"/>
    </reaction>
</comment>
<comment type="catalytic activity">
    <reaction evidence="1">
        <text>a 3-(all-trans-polyprenyl)benzene-1,2-diol + S-adenosyl-L-methionine = a 2-methoxy-6-(all-trans-polyprenyl)phenol + S-adenosyl-L-homocysteine + H(+)</text>
        <dbReference type="Rhea" id="RHEA:31411"/>
        <dbReference type="Rhea" id="RHEA-COMP:9550"/>
        <dbReference type="Rhea" id="RHEA-COMP:9551"/>
        <dbReference type="ChEBI" id="CHEBI:15378"/>
        <dbReference type="ChEBI" id="CHEBI:57856"/>
        <dbReference type="ChEBI" id="CHEBI:59789"/>
        <dbReference type="ChEBI" id="CHEBI:62729"/>
        <dbReference type="ChEBI" id="CHEBI:62731"/>
        <dbReference type="EC" id="2.1.1.222"/>
    </reaction>
</comment>
<comment type="pathway">
    <text evidence="1">Cofactor biosynthesis; ubiquinone biosynthesis.</text>
</comment>
<comment type="similarity">
    <text evidence="1">Belongs to the methyltransferase superfamily. UbiG/COQ3 family.</text>
</comment>
<feature type="chain" id="PRO_1000013910" description="Ubiquinone biosynthesis O-methyltransferase">
    <location>
        <begin position="1"/>
        <end position="232"/>
    </location>
</feature>
<feature type="binding site" evidence="1">
    <location>
        <position position="36"/>
    </location>
    <ligand>
        <name>S-adenosyl-L-methionine</name>
        <dbReference type="ChEBI" id="CHEBI:59789"/>
    </ligand>
</feature>
<feature type="binding site" evidence="1">
    <location>
        <position position="55"/>
    </location>
    <ligand>
        <name>S-adenosyl-L-methionine</name>
        <dbReference type="ChEBI" id="CHEBI:59789"/>
    </ligand>
</feature>
<feature type="binding site" evidence="1">
    <location>
        <position position="76"/>
    </location>
    <ligand>
        <name>S-adenosyl-L-methionine</name>
        <dbReference type="ChEBI" id="CHEBI:59789"/>
    </ligand>
</feature>
<feature type="binding site" evidence="1">
    <location>
        <position position="120"/>
    </location>
    <ligand>
        <name>S-adenosyl-L-methionine</name>
        <dbReference type="ChEBI" id="CHEBI:59789"/>
    </ligand>
</feature>
<sequence length="232" mass="25654">MSNVDHAEIAKFEALAHRWWDRESEFKPLHEINPLRVNWIDEHISLAGKKVIDIGCGGGILSEAMAQRGAQVTGIDMGEAPLSVARLHLLESGLEIDYRQITAEAMAAEAPEQFDVVTCLEMLEHVPDPASVIRACATLVKPGGQVFFSTINRNPKAYAFAIIGAEYVLQLLPRGTHDFKKFIRPSELGAWSRDAGLAVKDIIGLTYNPLTKHYKLSADVDVNYMVQTVKES</sequence>
<reference key="1">
    <citation type="journal article" date="2008" name="Proc. Natl. Acad. Sci. U.S.A.">
        <title>Nitrogen fixation island and rhizosphere competence traits in the genome of root-associated Pseudomonas stutzeri A1501.</title>
        <authorList>
            <person name="Yan Y."/>
            <person name="Yang J."/>
            <person name="Dou Y."/>
            <person name="Chen M."/>
            <person name="Ping S."/>
            <person name="Peng J."/>
            <person name="Lu W."/>
            <person name="Zhang W."/>
            <person name="Yao Z."/>
            <person name="Li H."/>
            <person name="Liu W."/>
            <person name="He S."/>
            <person name="Geng L."/>
            <person name="Zhang X."/>
            <person name="Yang F."/>
            <person name="Yu H."/>
            <person name="Zhan Y."/>
            <person name="Li D."/>
            <person name="Lin Z."/>
            <person name="Wang Y."/>
            <person name="Elmerich C."/>
            <person name="Lin M."/>
            <person name="Jin Q."/>
        </authorList>
    </citation>
    <scope>NUCLEOTIDE SEQUENCE [LARGE SCALE GENOMIC DNA]</scope>
    <source>
        <strain>A1501</strain>
    </source>
</reference>
<proteinExistence type="inferred from homology"/>
<name>UBIG_STUS1</name>
<protein>
    <recommendedName>
        <fullName evidence="1">Ubiquinone biosynthesis O-methyltransferase</fullName>
    </recommendedName>
    <alternativeName>
        <fullName evidence="1">2-polyprenyl-6-hydroxyphenol methylase</fullName>
        <ecNumber evidence="1">2.1.1.222</ecNumber>
    </alternativeName>
    <alternativeName>
        <fullName evidence="1">3-demethylubiquinone 3-O-methyltransferase</fullName>
        <ecNumber evidence="1">2.1.1.64</ecNumber>
    </alternativeName>
</protein>